<feature type="chain" id="PRO_0000435359" description="Riboflavin transporter">
    <location>
        <begin position="1"/>
        <end position="284"/>
    </location>
</feature>
<feature type="transmembrane region" description="Helical" evidence="2">
    <location>
        <begin position="26"/>
        <end position="46"/>
    </location>
</feature>
<feature type="transmembrane region" description="Helical" evidence="2">
    <location>
        <begin position="58"/>
        <end position="78"/>
    </location>
</feature>
<feature type="transmembrane region" description="Helical" evidence="2">
    <location>
        <begin position="82"/>
        <end position="102"/>
    </location>
</feature>
<feature type="transmembrane region" description="Helical" evidence="2">
    <location>
        <begin position="115"/>
        <end position="135"/>
    </location>
</feature>
<feature type="transmembrane region" description="Helical" evidence="2">
    <location>
        <begin position="136"/>
        <end position="156"/>
    </location>
</feature>
<feature type="transmembrane region" description="Helical" evidence="2">
    <location>
        <begin position="167"/>
        <end position="187"/>
    </location>
</feature>
<feature type="transmembrane region" description="Helical" evidence="2">
    <location>
        <begin position="195"/>
        <end position="215"/>
    </location>
</feature>
<feature type="transmembrane region" description="Helical" evidence="2">
    <location>
        <begin position="247"/>
        <end position="267"/>
    </location>
</feature>
<feature type="domain" description="EamA 1" evidence="2">
    <location>
        <begin position="2"/>
        <end position="129"/>
    </location>
</feature>
<feature type="domain" description="EamA 2" evidence="2">
    <location>
        <begin position="141"/>
        <end position="273"/>
    </location>
</feature>
<proteinExistence type="evidence at protein level"/>
<organism>
    <name type="scientific">Brucella anthropi (strain ATCC 49188 / DSM 6882 / CCUG 24695 / JCM 21032 / LMG 3331 / NBRC 15819 / NCTC 12168 / Alc 37)</name>
    <name type="common">Ochrobactrum anthropi</name>
    <dbReference type="NCBI Taxonomy" id="439375"/>
    <lineage>
        <taxon>Bacteria</taxon>
        <taxon>Pseudomonadati</taxon>
        <taxon>Pseudomonadota</taxon>
        <taxon>Alphaproteobacteria</taxon>
        <taxon>Hyphomicrobiales</taxon>
        <taxon>Brucellaceae</taxon>
        <taxon>Brucella/Ochrobactrum group</taxon>
        <taxon>Brucella</taxon>
    </lineage>
</organism>
<sequence>MVAACSAYAAVNVATQWAGTRTGIPSVIIAFWQYVIALVLTLPLLVRDGTRALRTSHFGLHVMRVALAAAGVQVWIYALTHVPIWQVVALSMTSPFFVILCARLFLQEKVTPARLLTTFTGFIGALIIIAPWSDSYTVYSLLPILAAALWAGYSVMTKYLTRFEKPASISAYMLVLLTPINAALWLASGLSMSAITAPDVEIWSILIVIGAFTALAQYFQTAAYSIADAVYLQPFDDLRLPINVIFGWIVFAAAPSINFWPGAALIIGASLYLMRQDSGTSRTA</sequence>
<name>RIBN_BRUA4</name>
<gene>
    <name evidence="4" type="primary">ribN</name>
    <name evidence="7" type="ordered locus">Oant_0035</name>
</gene>
<evidence type="ECO:0000250" key="1">
    <source>
        <dbReference type="UniProtKB" id="Q1MIM3"/>
    </source>
</evidence>
<evidence type="ECO:0000255" key="2"/>
<evidence type="ECO:0000269" key="3">
    <source>
    </source>
</evidence>
<evidence type="ECO:0000303" key="4">
    <source>
    </source>
</evidence>
<evidence type="ECO:0000305" key="5"/>
<evidence type="ECO:0000305" key="6">
    <source>
    </source>
</evidence>
<evidence type="ECO:0000312" key="7">
    <source>
        <dbReference type="EMBL" id="ABS12766.1"/>
    </source>
</evidence>
<accession>A6WUW2</accession>
<comment type="function">
    <text evidence="3">Transports riboflavin into the cell.</text>
</comment>
<comment type="subcellular location">
    <subcellularLocation>
        <location evidence="5">Cell membrane</location>
        <topology evidence="2">Multi-pass membrane protein</topology>
    </subcellularLocation>
</comment>
<comment type="induction">
    <text evidence="1 6">Negatively regulated by riboflavin, probably via an FMN riboswitch.</text>
</comment>
<comment type="similarity">
    <text evidence="5">Belongs to the drug/metabolite transporter (DMT) superfamily. 10 TMS drug/metabolite exporter (DME) (TC 2.A.7.3) family.</text>
</comment>
<reference key="1">
    <citation type="journal article" date="2011" name="J. Bacteriol.">
        <title>Genome of Ochrobactrum anthropi ATCC 49188 T, a versatile opportunistic pathogen and symbiont of several eukaryotic hosts.</title>
        <authorList>
            <person name="Chain P.S."/>
            <person name="Lang D.M."/>
            <person name="Comerci D.J."/>
            <person name="Malfatti S.A."/>
            <person name="Vergez L.M."/>
            <person name="Shin M."/>
            <person name="Ugalde R.A."/>
            <person name="Garcia E."/>
            <person name="Tolmasky M.E."/>
        </authorList>
    </citation>
    <scope>NUCLEOTIDE SEQUENCE [LARGE SCALE GENOMIC DNA]</scope>
    <source>
        <strain>ATCC 49188 / DSM 6882 / CCUG 24695 / JCM 21032 / LMG 3331 / NBRC 15819 / NCTC 12168 / Alc 37</strain>
    </source>
</reference>
<reference key="2">
    <citation type="journal article" date="2013" name="J. Bacteriol.">
        <title>Identification and characterization of RibN, a novel family of riboflavin transporters from Rhizobium leguminosarum and other Proteobacteria.</title>
        <authorList>
            <person name="Garcia Angulo V.A."/>
            <person name="Bonomi H.R."/>
            <person name="Posadas D.M."/>
            <person name="Serer M.I."/>
            <person name="Torres A.G."/>
            <person name="Zorreguieta A."/>
            <person name="Goldbaum F.A."/>
        </authorList>
    </citation>
    <scope>FUNCTION AS A TRANSPORTER</scope>
    <source>
        <strain>ATCC 49188 / DSM 6882 / CCUG 24695 / JCM 21032 / LMG 3331 / NBRC 15819 / NCTC 12168 / Alc 37</strain>
    </source>
</reference>
<protein>
    <recommendedName>
        <fullName evidence="4">Riboflavin transporter</fullName>
    </recommendedName>
</protein>
<dbReference type="EMBL" id="CP000758">
    <property type="protein sequence ID" value="ABS12766.1"/>
    <property type="molecule type" value="Genomic_DNA"/>
</dbReference>
<dbReference type="SMR" id="A6WUW2"/>
<dbReference type="STRING" id="439375.Oant_0035"/>
<dbReference type="TCDB" id="2.A.7.3.55">
    <property type="family name" value="the drug/metabolite transporter (dmt) superfamily"/>
</dbReference>
<dbReference type="KEGG" id="oan:Oant_0035"/>
<dbReference type="PATRIC" id="fig|439375.7.peg.36"/>
<dbReference type="eggNOG" id="COG0697">
    <property type="taxonomic scope" value="Bacteria"/>
</dbReference>
<dbReference type="HOGENOM" id="CLU_032828_0_0_5"/>
<dbReference type="PhylomeDB" id="A6WUW2"/>
<dbReference type="Proteomes" id="UP000002301">
    <property type="component" value="Chromosome 1"/>
</dbReference>
<dbReference type="GO" id="GO:0005886">
    <property type="term" value="C:plasma membrane"/>
    <property type="evidence" value="ECO:0007669"/>
    <property type="project" value="UniProtKB-SubCell"/>
</dbReference>
<dbReference type="InterPro" id="IPR000620">
    <property type="entry name" value="EamA_dom"/>
</dbReference>
<dbReference type="PANTHER" id="PTHR22911">
    <property type="entry name" value="ACYL-MALONYL CONDENSING ENZYME-RELATED"/>
    <property type="match status" value="1"/>
</dbReference>
<dbReference type="PANTHER" id="PTHR22911:SF6">
    <property type="entry name" value="SOLUTE CARRIER FAMILY 35 MEMBER G1"/>
    <property type="match status" value="1"/>
</dbReference>
<dbReference type="Pfam" id="PF00892">
    <property type="entry name" value="EamA"/>
    <property type="match status" value="2"/>
</dbReference>
<dbReference type="SUPFAM" id="SSF103481">
    <property type="entry name" value="Multidrug resistance efflux transporter EmrE"/>
    <property type="match status" value="2"/>
</dbReference>
<keyword id="KW-1003">Cell membrane</keyword>
<keyword id="KW-0472">Membrane</keyword>
<keyword id="KW-1185">Reference proteome</keyword>
<keyword id="KW-0677">Repeat</keyword>
<keyword id="KW-0812">Transmembrane</keyword>
<keyword id="KW-1133">Transmembrane helix</keyword>
<keyword id="KW-0813">Transport</keyword>